<comment type="catalytic activity">
    <reaction>
        <text>alpha-D-galactose 1-phosphate + UDP-alpha-D-glucose = alpha-D-glucose 1-phosphate + UDP-alpha-D-galactose</text>
        <dbReference type="Rhea" id="RHEA:13989"/>
        <dbReference type="ChEBI" id="CHEBI:58336"/>
        <dbReference type="ChEBI" id="CHEBI:58601"/>
        <dbReference type="ChEBI" id="CHEBI:58885"/>
        <dbReference type="ChEBI" id="CHEBI:66914"/>
        <dbReference type="EC" id="2.7.7.12"/>
    </reaction>
</comment>
<comment type="pathway">
    <text>Carbohydrate metabolism; galactose metabolism.</text>
</comment>
<comment type="subcellular location">
    <subcellularLocation>
        <location evidence="1">Cytoplasm</location>
    </subcellularLocation>
</comment>
<comment type="similarity">
    <text evidence="1">Belongs to the galactose-1-phosphate uridylyltransferase type 2 family.</text>
</comment>
<evidence type="ECO:0000305" key="1"/>
<reference key="1">
    <citation type="journal article" date="2001" name="J. Bacteriol.">
        <title>Activation of silent gal genes in the lac-gal regulon of Streptococcus thermophilus.</title>
        <authorList>
            <person name="Vaughan E.E."/>
            <person name="van den Bogaard P.T.C."/>
            <person name="Catzeddu P."/>
            <person name="Kuipers O.P."/>
            <person name="de Vos W.M."/>
        </authorList>
    </citation>
    <scope>NUCLEOTIDE SEQUENCE [GENOMIC DNA]</scope>
    <source>
        <strain>CNRZ 302</strain>
    </source>
</reference>
<reference key="2">
    <citation type="journal article" date="2002" name="J. Bacteriol.">
        <title>Galactose and lactose genes from the galactose-positive bacterium Streptococcus salivarius and the phylogenetically related galactose-negative bacterium Streptococcus thermophilus: organization, sequence, transcription, and activity of the gal gene products.</title>
        <authorList>
            <person name="Vaillancourt K."/>
            <person name="Moineau S."/>
            <person name="Frenette M."/>
            <person name="Lessard C."/>
            <person name="Vadeboncoeur C."/>
        </authorList>
    </citation>
    <scope>NUCLEOTIDE SEQUENCE [GENOMIC DNA]</scope>
    <source>
        <strain>SMQ-301</strain>
    </source>
</reference>
<dbReference type="EC" id="2.7.7.12"/>
<dbReference type="EMBL" id="U61402">
    <property type="protein sequence ID" value="AAD00094.1"/>
    <property type="molecule type" value="Genomic_DNA"/>
</dbReference>
<dbReference type="EMBL" id="AF389475">
    <property type="protein sequence ID" value="AAL67297.1"/>
    <property type="molecule type" value="Genomic_DNA"/>
</dbReference>
<dbReference type="RefSeq" id="WP_041827434.1">
    <property type="nucleotide sequence ID" value="NZ_VBTK01000009.1"/>
</dbReference>
<dbReference type="RefSeq" id="WP_116920306.1">
    <property type="nucleotide sequence ID" value="NZ_CP031545.1"/>
</dbReference>
<dbReference type="eggNOG" id="COG4468">
    <property type="taxonomic scope" value="Bacteria"/>
</dbReference>
<dbReference type="UniPathway" id="UPA00214"/>
<dbReference type="GO" id="GO:0005737">
    <property type="term" value="C:cytoplasm"/>
    <property type="evidence" value="ECO:0007669"/>
    <property type="project" value="UniProtKB-SubCell"/>
</dbReference>
<dbReference type="GO" id="GO:0008108">
    <property type="term" value="F:UDP-glucose:hexose-1-phosphate uridylyltransferase activity"/>
    <property type="evidence" value="ECO:0007669"/>
    <property type="project" value="UniProtKB-UniRule"/>
</dbReference>
<dbReference type="GO" id="GO:0006012">
    <property type="term" value="P:galactose metabolic process"/>
    <property type="evidence" value="ECO:0007669"/>
    <property type="project" value="UniProtKB-UniRule"/>
</dbReference>
<dbReference type="HAMAP" id="MF_00571">
    <property type="entry name" value="GalP_UDP_trans"/>
    <property type="match status" value="1"/>
</dbReference>
<dbReference type="InterPro" id="IPR000766">
    <property type="entry name" value="GalP_uridyl_Trfase_II"/>
</dbReference>
<dbReference type="InterPro" id="IPR023425">
    <property type="entry name" value="GalP_uridyl_Trfase_II_CS"/>
</dbReference>
<dbReference type="InterPro" id="IPR005850">
    <property type="entry name" value="GalP_Utransf_C"/>
</dbReference>
<dbReference type="InterPro" id="IPR005849">
    <property type="entry name" value="GalP_Utransf_N"/>
</dbReference>
<dbReference type="NCBIfam" id="TIGR01239">
    <property type="entry name" value="galT_2"/>
    <property type="match status" value="1"/>
</dbReference>
<dbReference type="NCBIfam" id="NF003629">
    <property type="entry name" value="PRK05270.1-2"/>
    <property type="match status" value="1"/>
</dbReference>
<dbReference type="NCBIfam" id="NF003631">
    <property type="entry name" value="PRK05270.1-5"/>
    <property type="match status" value="1"/>
</dbReference>
<dbReference type="NCBIfam" id="NF003633">
    <property type="entry name" value="PRK05270.2-2"/>
    <property type="match status" value="1"/>
</dbReference>
<dbReference type="PANTHER" id="PTHR39191:SF1">
    <property type="entry name" value="DUF4922 DOMAIN-CONTAINING PROTEIN"/>
    <property type="match status" value="1"/>
</dbReference>
<dbReference type="PANTHER" id="PTHR39191">
    <property type="entry name" value="GALACTOSE-1-PHOSPHATE URIDYLYLTRANSFERASE"/>
    <property type="match status" value="1"/>
</dbReference>
<dbReference type="Pfam" id="PF02744">
    <property type="entry name" value="GalP_UDP_tr_C"/>
    <property type="match status" value="1"/>
</dbReference>
<dbReference type="Pfam" id="PF01087">
    <property type="entry name" value="GalP_UDP_transf"/>
    <property type="match status" value="1"/>
</dbReference>
<dbReference type="PIRSF" id="PIRSF006005">
    <property type="entry name" value="GalT_BS"/>
    <property type="match status" value="1"/>
</dbReference>
<dbReference type="PROSITE" id="PS01163">
    <property type="entry name" value="GAL_P_UDP_TRANSF_II"/>
    <property type="match status" value="1"/>
</dbReference>
<protein>
    <recommendedName>
        <fullName>Galactose-1-phosphate uridylyltransferase</fullName>
        <shortName>Gal-1-P uridylyltransferase</shortName>
        <ecNumber>2.7.7.12</ecNumber>
    </recommendedName>
    <alternativeName>
        <fullName>UDP-glucose--hexose-1-phosphate uridylyltransferase</fullName>
    </alternativeName>
</protein>
<accession>Q9ZB09</accession>
<accession>Q8VS86</accession>
<proteinExistence type="inferred from homology"/>
<feature type="chain" id="PRO_0000169919" description="Galactose-1-phosphate uridylyltransferase">
    <location>
        <begin position="1"/>
        <end position="493"/>
    </location>
</feature>
<feature type="sequence variant" description="In strain: SMQ-301.">
    <original>I</original>
    <variation>V</variation>
    <location>
        <position position="42"/>
    </location>
</feature>
<feature type="sequence variant" description="In strain: SMQ-301.">
    <original>K</original>
    <variation>N</variation>
    <location>
        <position position="70"/>
    </location>
</feature>
<feature type="sequence variant" description="In strain: SMQ-301.">
    <original>I</original>
    <variation>T</variation>
    <location>
        <position position="107"/>
    </location>
</feature>
<feature type="sequence variant" description="In strain: SMQ-301.">
    <original>V</original>
    <variation>A</variation>
    <location>
        <position position="243"/>
    </location>
</feature>
<feature type="sequence variant" description="In strain: SMQ-301.">
    <original>A</original>
    <variation>D</variation>
    <location>
        <position position="480"/>
    </location>
</feature>
<name>GALT_STRTR</name>
<keyword id="KW-0119">Carbohydrate metabolism</keyword>
<keyword id="KW-0963">Cytoplasm</keyword>
<keyword id="KW-0299">Galactose metabolism</keyword>
<keyword id="KW-0548">Nucleotidyltransferase</keyword>
<keyword id="KW-0808">Transferase</keyword>
<gene>
    <name type="primary">galT</name>
</gene>
<sequence length="493" mass="55413">MAENLVNTFVTQVIENSDYEELDRIYLTNKVFTLVGEGVADIETDSSELIDLKDQLLQAGVKAGSVGELKEEQDIIGAQLMDLITPRPSVVNRNFWDTYKSNPEQAIADFYAQSKRNDYVKVKAIAQNIAYKAPTKYGDLEITINLSKPEKDPKAIAAAKNAVASDYPKCQLCMENEGYLGRINHPARSNHRVVRFQMEDKEWGFQYSPYAYFNEHSIFFYGKHEPMHISPLTFGRLLTIVEVFPGYFAGSNADLPIVGGSILTHEHYQGGRHTFPMEVAGIKEKVSFDGYSDVEAGIVNWPMSVLRLRSEDKGRLIALATKILNCWRGYSDEKAGVLAESDGQPHHTITPIARRKDGKFELDLVLRDNQTSEEYPDGIYHPHKDVQHIKKENIGLIEVMGLAILPPRLKTELKDVEDYLLGQGNQVAPIHQEWADELKAQNPNITAEEVTEVVRQSVADIFARVLEDAGVYKTNSEGLAQFKAFVDFVNLAD</sequence>
<organism>
    <name type="scientific">Streptococcus thermophilus</name>
    <dbReference type="NCBI Taxonomy" id="1308"/>
    <lineage>
        <taxon>Bacteria</taxon>
        <taxon>Bacillati</taxon>
        <taxon>Bacillota</taxon>
        <taxon>Bacilli</taxon>
        <taxon>Lactobacillales</taxon>
        <taxon>Streptococcaceae</taxon>
        <taxon>Streptococcus</taxon>
    </lineage>
</organism>